<accession>Q6NRG6</accession>
<protein>
    <recommendedName>
        <fullName>Spindle assembly abnormal protein 6 homolog</fullName>
    </recommendedName>
</protein>
<proteinExistence type="evidence at transcript level"/>
<feature type="chain" id="PRO_0000189976" description="Spindle assembly abnormal protein 6 homolog">
    <location>
        <begin position="1"/>
        <end position="668"/>
    </location>
</feature>
<feature type="domain" description="PISA">
    <location>
        <begin position="39"/>
        <end position="91"/>
    </location>
</feature>
<feature type="region of interest" description="Disordered" evidence="4">
    <location>
        <begin position="623"/>
        <end position="668"/>
    </location>
</feature>
<feature type="coiled-coil region" evidence="3">
    <location>
        <begin position="182"/>
        <end position="482"/>
    </location>
</feature>
<evidence type="ECO:0000250" key="1">
    <source>
        <dbReference type="UniProtKB" id="Q6UVJ0"/>
    </source>
</evidence>
<evidence type="ECO:0000250" key="2">
    <source>
        <dbReference type="UniProtKB" id="Q7ZVT3"/>
    </source>
</evidence>
<evidence type="ECO:0000255" key="3"/>
<evidence type="ECO:0000256" key="4">
    <source>
        <dbReference type="SAM" id="MobiDB-lite"/>
    </source>
</evidence>
<evidence type="ECO:0000269" key="5">
    <source>
    </source>
</evidence>
<organism>
    <name type="scientific">Xenopus laevis</name>
    <name type="common">African clawed frog</name>
    <dbReference type="NCBI Taxonomy" id="8355"/>
    <lineage>
        <taxon>Eukaryota</taxon>
        <taxon>Metazoa</taxon>
        <taxon>Chordata</taxon>
        <taxon>Craniata</taxon>
        <taxon>Vertebrata</taxon>
        <taxon>Euteleostomi</taxon>
        <taxon>Amphibia</taxon>
        <taxon>Batrachia</taxon>
        <taxon>Anura</taxon>
        <taxon>Pipoidea</taxon>
        <taxon>Pipidae</taxon>
        <taxon>Xenopodinae</taxon>
        <taxon>Xenopus</taxon>
        <taxon>Xenopus</taxon>
    </lineage>
</organism>
<dbReference type="EMBL" id="BC070784">
    <property type="protein sequence ID" value="AAH70784.1"/>
    <property type="molecule type" value="mRNA"/>
</dbReference>
<dbReference type="RefSeq" id="NP_001084818.1">
    <property type="nucleotide sequence ID" value="NM_001091349.1"/>
</dbReference>
<dbReference type="SMR" id="Q6NRG6"/>
<dbReference type="DNASU" id="431859"/>
<dbReference type="GeneID" id="431859"/>
<dbReference type="KEGG" id="xla:431859"/>
<dbReference type="AGR" id="Xenbase:XB-GENE-5783576"/>
<dbReference type="CTD" id="431859"/>
<dbReference type="Xenbase" id="XB-GENE-5783576">
    <property type="gene designation" value="sass6.L"/>
</dbReference>
<dbReference type="OMA" id="KHDSMES"/>
<dbReference type="OrthoDB" id="49058at2759"/>
<dbReference type="Proteomes" id="UP000186698">
    <property type="component" value="Chromosome 1L"/>
</dbReference>
<dbReference type="Bgee" id="431859">
    <property type="expression patterns" value="Expressed in egg cell and 17 other cell types or tissues"/>
</dbReference>
<dbReference type="GO" id="GO:0005814">
    <property type="term" value="C:centriole"/>
    <property type="evidence" value="ECO:0000250"/>
    <property type="project" value="UniProtKB"/>
</dbReference>
<dbReference type="GO" id="GO:0005813">
    <property type="term" value="C:centrosome"/>
    <property type="evidence" value="ECO:0000318"/>
    <property type="project" value="GO_Central"/>
</dbReference>
<dbReference type="GO" id="GO:0005737">
    <property type="term" value="C:cytoplasm"/>
    <property type="evidence" value="ECO:0007669"/>
    <property type="project" value="UniProtKB-KW"/>
</dbReference>
<dbReference type="GO" id="GO:0098536">
    <property type="term" value="C:deuterosome"/>
    <property type="evidence" value="ECO:0000314"/>
    <property type="project" value="UniProtKB"/>
</dbReference>
<dbReference type="GO" id="GO:0007099">
    <property type="term" value="P:centriole replication"/>
    <property type="evidence" value="ECO:0000250"/>
    <property type="project" value="UniProtKB"/>
</dbReference>
<dbReference type="CDD" id="cd10142">
    <property type="entry name" value="HD_SAS6_N"/>
    <property type="match status" value="1"/>
</dbReference>
<dbReference type="Gene3D" id="2.170.210.20">
    <property type="entry name" value="Spindle assembly abnormal protein 6, N-terminal domain"/>
    <property type="match status" value="1"/>
</dbReference>
<dbReference type="InterPro" id="IPR032396">
    <property type="entry name" value="SAS-6_N"/>
</dbReference>
<dbReference type="InterPro" id="IPR038558">
    <property type="entry name" value="SAS-6_N_sf"/>
</dbReference>
<dbReference type="InterPro" id="IPR041513">
    <property type="entry name" value="SAS6_CC"/>
</dbReference>
<dbReference type="PANTHER" id="PTHR44281">
    <property type="entry name" value="SPINDLE ASSEMBLY ABNORMAL PROTEIN 6 HOMOLOG"/>
    <property type="match status" value="1"/>
</dbReference>
<dbReference type="PANTHER" id="PTHR44281:SF5">
    <property type="entry name" value="SPINDLE ASSEMBLY ABNORMAL PROTEIN 6 HOMOLOG"/>
    <property type="match status" value="1"/>
</dbReference>
<dbReference type="Pfam" id="PF16531">
    <property type="entry name" value="SAS-6_N"/>
    <property type="match status" value="1"/>
</dbReference>
<dbReference type="Pfam" id="PF18594">
    <property type="entry name" value="Sas6_CC"/>
    <property type="match status" value="1"/>
</dbReference>
<name>SAS6_XENLA</name>
<comment type="function">
    <text evidence="1 2">Central scaffolding component of the centrioles ensuring their 9-fold symmetry. Required for centrosome biogenesis and duplication: required both for mother-centriole-dependent centriole duplication and deuterosome-dependent centriole amplification in multiciliated cells (By similarity).</text>
</comment>
<comment type="subunit">
    <text evidence="2">Nine homodimers form a cartwheel structure with an internal diameter of 23 nM and radial spokes connecting to the microtubule triplets.</text>
</comment>
<comment type="subcellular location">
    <subcellularLocation>
        <location evidence="2">Cytoplasm</location>
        <location evidence="2">Cytoskeleton</location>
        <location evidence="2">Microtubule organizing center</location>
        <location evidence="2">Centrosome</location>
    </subcellularLocation>
    <text evidence="2 5">Component of the centrosome (By similarity). Component of the deuterosome, a structure that promotes de novo centriole amplification in multiciliated cells that can generate more than 100 centrioles.</text>
</comment>
<comment type="domain">
    <text evidence="2">The 35 nM long coiled-coil domain mediates homodimerization while the globular N-terminus links the dimers at an angle of 40 degrees to form the inner ring.</text>
</comment>
<keyword id="KW-0131">Cell cycle</keyword>
<keyword id="KW-0175">Coiled coil</keyword>
<keyword id="KW-0963">Cytoplasm</keyword>
<keyword id="KW-0206">Cytoskeleton</keyword>
<keyword id="KW-1185">Reference proteome</keyword>
<sequence length="668" mass="75130">MADELFCKVLSIGIKCRECEDRRANVRLTVESRSSSNPVHKKELVVRLSDDTDPFFLYNLTLGEEDFQSLKNQQGLLVEFSAFPQRFIDLLEQCILEQEKPVPRFLLQLAMSSNALDCMPASLNIIETNPFKHLIHLSLKLLAGSDSDVKKYLATCIKNLKLENCTLKEKLHKSEEDLSKRLGVTQQALAEKCKELDKLRNEWASQTSLLTSKHTQEIGAEREKALQIQTQYQLQYEQQKKELETTSSRTVHHLESRVSELEAVNKDLTERKYKSESCIRELKGKLSGIEEEYHRAKQEVTSLRRENATLDSECHEKEKLINQLKTKTAVLEQEVKDKEHVIIRSVDACESAQEHKKKLEDSLEQKQMQTGKLETTVKSLSEELIKANEIIKKLQTDMKKLMEKIKLKNAVTMQQEKLLGEKEQTLQKEKLELTNVKHLLKIKEEEMLKLKEQLDSTTEKLEESKQQLKTNENVIAWLNKQLNENKIATLQGPHGLHEMPSSLKTVGSASNVGVMQSTQPQFTIGNDPYMVSPITQPIGSAFVSNFYPKNFAPGMSAPSSISLGTRLNPQAAFKANVRFNQSPTALCSPAVEPRPAPSTSTPILPSTSCDPVGLDMKYLKKNGSVPVKGQRNGSSAGTVPVRPALPKSGSSPILSAYFPGQQSRLPAS</sequence>
<reference key="1">
    <citation type="submission" date="2004-05" db="EMBL/GenBank/DDBJ databases">
        <authorList>
            <consortium name="NIH - Xenopus Gene Collection (XGC) project"/>
        </authorList>
    </citation>
    <scope>NUCLEOTIDE SEQUENCE [LARGE SCALE MRNA]</scope>
    <source>
        <tissue>Oocyte</tissue>
    </source>
</reference>
<reference key="2">
    <citation type="journal article" date="2013" name="Dev. Cell">
        <title>Deuterosome-mediated centriole biogenesis.</title>
        <authorList>
            <person name="Klos Dehring D.A."/>
            <person name="Vladar E.K."/>
            <person name="Werner M.E."/>
            <person name="Mitchell J.W."/>
            <person name="Hwang P."/>
            <person name="Mitchell B.J."/>
        </authorList>
    </citation>
    <scope>SUBCELLULAR LOCATION</scope>
</reference>
<gene>
    <name type="primary">sas6</name>
</gene>